<keyword id="KW-0106">Calcium</keyword>
<keyword id="KW-0479">Metal-binding</keyword>
<keyword id="KW-1185">Reference proteome</keyword>
<reference key="1">
    <citation type="journal article" date="2004" name="Genome Res.">
        <title>The status, quality, and expansion of the NIH full-length cDNA project: the Mammalian Gene Collection (MGC).</title>
        <authorList>
            <consortium name="The MGC Project Team"/>
        </authorList>
    </citation>
    <scope>NUCLEOTIDE SEQUENCE [LARGE SCALE MRNA]</scope>
    <source>
        <tissue>Brain</tissue>
    </source>
</reference>
<reference key="2">
    <citation type="journal article" date="2007" name="BMC Genomics">
        <title>The full-ORF clone resource of the German cDNA consortium.</title>
        <authorList>
            <person name="Bechtel S."/>
            <person name="Rosenfelder H."/>
            <person name="Duda A."/>
            <person name="Schmidt C.P."/>
            <person name="Ernst U."/>
            <person name="Wellenreuther R."/>
            <person name="Mehrle A."/>
            <person name="Schuster C."/>
            <person name="Bahr A."/>
            <person name="Bloecker H."/>
            <person name="Heubner D."/>
            <person name="Hoerlein A."/>
            <person name="Michel G."/>
            <person name="Wedler H."/>
            <person name="Koehrer K."/>
            <person name="Ottenwaelder B."/>
            <person name="Poustka A."/>
            <person name="Wiemann S."/>
            <person name="Schupp I."/>
        </authorList>
    </citation>
    <scope>NUCLEOTIDE SEQUENCE [LARGE SCALE MRNA] OF 91-572</scope>
    <source>
        <tissue>Testis</tissue>
    </source>
</reference>
<name>EFC12_HUMAN</name>
<comment type="interaction">
    <interactant intactId="EBI-10251535">
        <id>Q6NXP0</id>
    </interactant>
    <interactant intactId="EBI-741101">
        <id>Q13643</id>
        <label>FHL3</label>
    </interactant>
    <organismsDiffer>false</organismsDiffer>
    <experiments>3</experiments>
</comment>
<feature type="chain" id="PRO_0000238660" description="EF-hand calcium-binding domain-containing protein 12">
    <location>
        <begin position="1"/>
        <end position="572"/>
    </location>
</feature>
<feature type="domain" description="EF-hand" evidence="1">
    <location>
        <begin position="196"/>
        <end position="231"/>
    </location>
</feature>
<feature type="region of interest" description="Disordered" evidence="2">
    <location>
        <begin position="62"/>
        <end position="85"/>
    </location>
</feature>
<feature type="region of interest" description="Disordered" evidence="2">
    <location>
        <begin position="146"/>
        <end position="169"/>
    </location>
</feature>
<feature type="binding site" evidence="3">
    <location>
        <position position="212"/>
    </location>
    <ligand>
        <name>Ca(2+)</name>
        <dbReference type="ChEBI" id="CHEBI:29108"/>
    </ligand>
</feature>
<feature type="sequence variant" id="VAR_061089" description="In dbSNP:rs58932597.">
    <original>P</original>
    <variation>L</variation>
    <location>
        <position position="36"/>
    </location>
</feature>
<feature type="sequence variant" id="VAR_033697" description="In dbSNP:rs3774787.">
    <original>E</original>
    <variation>G</variation>
    <location>
        <position position="66"/>
    </location>
</feature>
<feature type="sequence variant" id="VAR_048667" description="In dbSNP:rs6790768.">
    <original>R</original>
    <variation>G</variation>
    <location>
        <position position="215"/>
    </location>
</feature>
<feature type="sequence variant" id="VAR_061090" description="In dbSNP:rs9836111.">
    <original>H</original>
    <variation>R</variation>
    <location>
        <position position="280"/>
    </location>
</feature>
<feature type="sequence variant" id="VAR_048668" description="In dbSNP:rs12637267.">
    <original>P</original>
    <variation>S</variation>
    <location>
        <position position="541"/>
    </location>
</feature>
<protein>
    <recommendedName>
        <fullName>EF-hand calcium-binding domain-containing protein 12</fullName>
    </recommendedName>
</protein>
<evidence type="ECO:0000255" key="1">
    <source>
        <dbReference type="PROSITE-ProRule" id="PRU00448"/>
    </source>
</evidence>
<evidence type="ECO:0000256" key="2">
    <source>
        <dbReference type="SAM" id="MobiDB-lite"/>
    </source>
</evidence>
<evidence type="ECO:0000305" key="3"/>
<dbReference type="EMBL" id="BC066975">
    <property type="protein sequence ID" value="AAH66975.1"/>
    <property type="molecule type" value="mRNA"/>
</dbReference>
<dbReference type="EMBL" id="AL133011">
    <property type="protein sequence ID" value="CAH10712.1"/>
    <property type="molecule type" value="mRNA"/>
</dbReference>
<dbReference type="CCDS" id="CCDS54638.1"/>
<dbReference type="RefSeq" id="NP_997190.1">
    <property type="nucleotide sequence ID" value="NM_207307.3"/>
</dbReference>
<dbReference type="SMR" id="Q6NXP0"/>
<dbReference type="BioGRID" id="124687">
    <property type="interactions" value="6"/>
</dbReference>
<dbReference type="FunCoup" id="Q6NXP0">
    <property type="interactions" value="8"/>
</dbReference>
<dbReference type="IntAct" id="Q6NXP0">
    <property type="interactions" value="2"/>
</dbReference>
<dbReference type="STRING" id="9606.ENSP00000420854"/>
<dbReference type="iPTMnet" id="Q6NXP0"/>
<dbReference type="PhosphoSitePlus" id="Q6NXP0"/>
<dbReference type="BioMuta" id="EFCAB12"/>
<dbReference type="DMDM" id="74736979"/>
<dbReference type="MassIVE" id="Q6NXP0"/>
<dbReference type="PaxDb" id="9606-ENSP00000420854"/>
<dbReference type="PeptideAtlas" id="Q6NXP0"/>
<dbReference type="ProteomicsDB" id="66758"/>
<dbReference type="Antibodypedia" id="49952">
    <property type="antibodies" value="65 antibodies from 10 providers"/>
</dbReference>
<dbReference type="DNASU" id="90288"/>
<dbReference type="Ensembl" id="ENST00000505956.6">
    <property type="protein sequence ID" value="ENSP00000420854.1"/>
    <property type="gene ID" value="ENSG00000172771.13"/>
</dbReference>
<dbReference type="GeneID" id="90288"/>
<dbReference type="KEGG" id="hsa:90288"/>
<dbReference type="MANE-Select" id="ENST00000505956.6">
    <property type="protein sequence ID" value="ENSP00000420854.1"/>
    <property type="RefSeq nucleotide sequence ID" value="NM_207307.3"/>
    <property type="RefSeq protein sequence ID" value="NP_997190.1"/>
</dbReference>
<dbReference type="UCSC" id="uc003emg.3">
    <property type="organism name" value="human"/>
</dbReference>
<dbReference type="AGR" id="HGNC:28061"/>
<dbReference type="CTD" id="90288"/>
<dbReference type="DisGeNET" id="90288"/>
<dbReference type="GeneCards" id="EFCAB12"/>
<dbReference type="HGNC" id="HGNC:28061">
    <property type="gene designation" value="EFCAB12"/>
</dbReference>
<dbReference type="HPA" id="ENSG00000172771">
    <property type="expression patterns" value="Tissue enhanced (choroid plexus, fallopian tube)"/>
</dbReference>
<dbReference type="neXtProt" id="NX_Q6NXP0"/>
<dbReference type="OpenTargets" id="ENSG00000172771"/>
<dbReference type="VEuPathDB" id="HostDB:ENSG00000172771"/>
<dbReference type="eggNOG" id="ENOG502QSZS">
    <property type="taxonomic scope" value="Eukaryota"/>
</dbReference>
<dbReference type="GeneTree" id="ENSGT00390000014874"/>
<dbReference type="HOGENOM" id="CLU_034466_1_0_1"/>
<dbReference type="InParanoid" id="Q6NXP0"/>
<dbReference type="OMA" id="RVIAHCF"/>
<dbReference type="OrthoDB" id="10005811at2759"/>
<dbReference type="PAN-GO" id="Q6NXP0">
    <property type="GO annotations" value="0 GO annotations based on evolutionary models"/>
</dbReference>
<dbReference type="PhylomeDB" id="Q6NXP0"/>
<dbReference type="TreeFam" id="TF336894"/>
<dbReference type="PathwayCommons" id="Q6NXP0"/>
<dbReference type="SignaLink" id="Q6NXP0"/>
<dbReference type="BioGRID-ORCS" id="90288">
    <property type="hits" value="7 hits in 1153 CRISPR screens"/>
</dbReference>
<dbReference type="GenomeRNAi" id="90288"/>
<dbReference type="Pharos" id="Q6NXP0">
    <property type="development level" value="Tdark"/>
</dbReference>
<dbReference type="PRO" id="PR:Q6NXP0"/>
<dbReference type="Proteomes" id="UP000005640">
    <property type="component" value="Chromosome 3"/>
</dbReference>
<dbReference type="RNAct" id="Q6NXP0">
    <property type="molecule type" value="protein"/>
</dbReference>
<dbReference type="Bgee" id="ENSG00000172771">
    <property type="expression patterns" value="Expressed in right uterine tube and 108 other cell types or tissues"/>
</dbReference>
<dbReference type="ExpressionAtlas" id="Q6NXP0">
    <property type="expression patterns" value="baseline and differential"/>
</dbReference>
<dbReference type="GO" id="GO:0005509">
    <property type="term" value="F:calcium ion binding"/>
    <property type="evidence" value="ECO:0007669"/>
    <property type="project" value="InterPro"/>
</dbReference>
<dbReference type="InterPro" id="IPR011992">
    <property type="entry name" value="EF-hand-dom_pair"/>
</dbReference>
<dbReference type="InterPro" id="IPR002048">
    <property type="entry name" value="EF_hand_dom"/>
</dbReference>
<dbReference type="InterPro" id="IPR042847">
    <property type="entry name" value="EFC12"/>
</dbReference>
<dbReference type="PANTHER" id="PTHR47225">
    <property type="entry name" value="EF-HAND CALCIUM-BINDING DOMAIN-CONTAINING PROTEIN 12"/>
    <property type="match status" value="1"/>
</dbReference>
<dbReference type="PANTHER" id="PTHR47225:SF1">
    <property type="entry name" value="EF-HAND CALCIUM-BINDING DOMAIN-CONTAINING PROTEIN 12"/>
    <property type="match status" value="1"/>
</dbReference>
<dbReference type="SUPFAM" id="SSF47473">
    <property type="entry name" value="EF-hand"/>
    <property type="match status" value="1"/>
</dbReference>
<dbReference type="PROSITE" id="PS50222">
    <property type="entry name" value="EF_HAND_2"/>
    <property type="match status" value="1"/>
</dbReference>
<sequence length="572" mass="66551">MDDDYEAYHSLFLSLLGLCPSKTPINENAPVFDPEPVIAHCFKQFQQKDFRLPQTRRRIIMVPRKEDQTPLNPASQPQAPPKPIPSFKVLEARDIQEQPEDRKTWLSQRSKLRQELESFGDVKRWLENKPSITPSEAKVLHMIHEEQSAQPNASQATTRTTRKKAPRLSRLSRQMVPQLQLPEPPALSVMYSYLHSRKIKILEIFHKVGQGENQRITREEFIAAVKAVGVPLKNQEVEDIVIYLSSLGKHNTITMDILANTYKQWSMAQQRSSLATAREHYILAKHRDSLKGPLKKQEVDSAPQLPKVDLLTVPAVDTQMETRPMTLEEMEEVGKRYRERQRQHKLTIPSIQYTEQCHLVRCGNRHFDEHCLPSTIHGDMRELIDSARRHNFLVYLQCWKLCKSYGLPLTEDILMKALLYPGDKIIFQMDKVCPIRQPGGYYSDWKVFSPNLALLRSQGPGKSKRTDKKTPKKSKKMRFKEFEEFTRKLKVKRSSGLQQTHPNSFWPGHLLDKLQLYLPTVATDRSLALFSCVQHQPHVYPATYHPDHWWPLRNKNYMTHAHYDAAKVYYIN</sequence>
<accession>Q6NXP0</accession>
<accession>Q69YX4</accession>
<organism>
    <name type="scientific">Homo sapiens</name>
    <name type="common">Human</name>
    <dbReference type="NCBI Taxonomy" id="9606"/>
    <lineage>
        <taxon>Eukaryota</taxon>
        <taxon>Metazoa</taxon>
        <taxon>Chordata</taxon>
        <taxon>Craniata</taxon>
        <taxon>Vertebrata</taxon>
        <taxon>Euteleostomi</taxon>
        <taxon>Mammalia</taxon>
        <taxon>Eutheria</taxon>
        <taxon>Euarchontoglires</taxon>
        <taxon>Primates</taxon>
        <taxon>Haplorrhini</taxon>
        <taxon>Catarrhini</taxon>
        <taxon>Hominidae</taxon>
        <taxon>Homo</taxon>
    </lineage>
</organism>
<proteinExistence type="evidence at protein level"/>
<gene>
    <name type="primary">EFCAB12</name>
    <name type="synonym">C3orf25</name>
</gene>